<comment type="function">
    <text evidence="1 4">Mediates electroneutral potassium-chloride cotransport when activated by cell swelling (By similarity). May mediate K(+) uptake into Deiters' cells in the cochlea and contribute to K(+) recycling in the inner ear. Important for the survival of cochlear outer and inner hair cells and the maintenance of the organ of Corti. May be required for basolateral Cl(-) extrusion in the kidney and contribute to renal acidification (By similarity).</text>
</comment>
<comment type="catalytic activity">
    <reaction evidence="4">
        <text>K(+)(in) + chloride(in) = K(+)(out) + chloride(out)</text>
        <dbReference type="Rhea" id="RHEA:72427"/>
        <dbReference type="ChEBI" id="CHEBI:17996"/>
        <dbReference type="ChEBI" id="CHEBI:29103"/>
    </reaction>
</comment>
<comment type="activity regulation">
    <text evidence="4">Activated by N-ethylmaleimide (NEM). Inhibited by furosemide, DIDS and bumetanide. The inhibition is much stronger in the presence of 50 mM K(+) in the uptake medium. Inhibited by DIOA. Inhibited by WNK3.</text>
</comment>
<comment type="subunit">
    <text evidence="4">Homodimer; adopts a domain-swap conformation at the scissor helices connecting the transmembrane domain and C-terminal domain (By similarity). Heterodimer with K-Cl cotransporter SLC12A5 (By similarity).</text>
</comment>
<comment type="subcellular location">
    <subcellularLocation>
        <location evidence="2">Cell membrane</location>
        <topology evidence="2">Multi-pass membrane protein</topology>
    </subcellularLocation>
</comment>
<comment type="tissue specificity">
    <text evidence="8">Widely expressed with highest levels in kidney, liver and pancreas. Expressed in choroid plexus and suprachiasmatic nucleus.</text>
</comment>
<comment type="similarity">
    <text evidence="9">Belongs to the SLC12A transporter family. K/Cl co-transporter subfamily.</text>
</comment>
<comment type="sequence caution" evidence="9">
    <conflict type="miscellaneous discrepancy">
        <sequence resource="EMBL-CDS" id="AAH86339"/>
    </conflict>
    <text>Intron retention. This sequence is incomplete at its 3'end and extensively differs from that shown in positions 214-251.</text>
</comment>
<reference evidence="9" key="1">
    <citation type="journal article" date="2004" name="Nature">
        <title>Genome sequence of the Brown Norway rat yields insights into mammalian evolution.</title>
        <authorList>
            <person name="Gibbs R.A."/>
            <person name="Weinstock G.M."/>
            <person name="Metzker M.L."/>
            <person name="Muzny D.M."/>
            <person name="Sodergren E.J."/>
            <person name="Scherer S."/>
            <person name="Scott G."/>
            <person name="Steffen D."/>
            <person name="Worley K.C."/>
            <person name="Burch P.E."/>
            <person name="Okwuonu G."/>
            <person name="Hines S."/>
            <person name="Lewis L."/>
            <person name="Deramo C."/>
            <person name="Delgado O."/>
            <person name="Dugan-Rocha S."/>
            <person name="Miner G."/>
            <person name="Morgan M."/>
            <person name="Hawes A."/>
            <person name="Gill R."/>
            <person name="Holt R.A."/>
            <person name="Adams M.D."/>
            <person name="Amanatides P.G."/>
            <person name="Baden-Tillson H."/>
            <person name="Barnstead M."/>
            <person name="Chin S."/>
            <person name="Evans C.A."/>
            <person name="Ferriera S."/>
            <person name="Fosler C."/>
            <person name="Glodek A."/>
            <person name="Gu Z."/>
            <person name="Jennings D."/>
            <person name="Kraft C.L."/>
            <person name="Nguyen T."/>
            <person name="Pfannkoch C.M."/>
            <person name="Sitter C."/>
            <person name="Sutton G.G."/>
            <person name="Venter J.C."/>
            <person name="Woodage T."/>
            <person name="Smith D."/>
            <person name="Lee H.-M."/>
            <person name="Gustafson E."/>
            <person name="Cahill P."/>
            <person name="Kana A."/>
            <person name="Doucette-Stamm L."/>
            <person name="Weinstock K."/>
            <person name="Fechtel K."/>
            <person name="Weiss R.B."/>
            <person name="Dunn D.M."/>
            <person name="Green E.D."/>
            <person name="Blakesley R.W."/>
            <person name="Bouffard G.G."/>
            <person name="De Jong P.J."/>
            <person name="Osoegawa K."/>
            <person name="Zhu B."/>
            <person name="Marra M."/>
            <person name="Schein J."/>
            <person name="Bosdet I."/>
            <person name="Fjell C."/>
            <person name="Jones S."/>
            <person name="Krzywinski M."/>
            <person name="Mathewson C."/>
            <person name="Siddiqui A."/>
            <person name="Wye N."/>
            <person name="McPherson J."/>
            <person name="Zhao S."/>
            <person name="Fraser C.M."/>
            <person name="Shetty J."/>
            <person name="Shatsman S."/>
            <person name="Geer K."/>
            <person name="Chen Y."/>
            <person name="Abramzon S."/>
            <person name="Nierman W.C."/>
            <person name="Havlak P.H."/>
            <person name="Chen R."/>
            <person name="Durbin K.J."/>
            <person name="Egan A."/>
            <person name="Ren Y."/>
            <person name="Song X.-Z."/>
            <person name="Li B."/>
            <person name="Liu Y."/>
            <person name="Qin X."/>
            <person name="Cawley S."/>
            <person name="Cooney A.J."/>
            <person name="D'Souza L.M."/>
            <person name="Martin K."/>
            <person name="Wu J.Q."/>
            <person name="Gonzalez-Garay M.L."/>
            <person name="Jackson A.R."/>
            <person name="Kalafus K.J."/>
            <person name="McLeod M.P."/>
            <person name="Milosavljevic A."/>
            <person name="Virk D."/>
            <person name="Volkov A."/>
            <person name="Wheeler D.A."/>
            <person name="Zhang Z."/>
            <person name="Bailey J.A."/>
            <person name="Eichler E.E."/>
            <person name="Tuzun E."/>
            <person name="Birney E."/>
            <person name="Mongin E."/>
            <person name="Ureta-Vidal A."/>
            <person name="Woodwark C."/>
            <person name="Zdobnov E."/>
            <person name="Bork P."/>
            <person name="Suyama M."/>
            <person name="Torrents D."/>
            <person name="Alexandersson M."/>
            <person name="Trask B.J."/>
            <person name="Young J.M."/>
            <person name="Huang H."/>
            <person name="Wang H."/>
            <person name="Xing H."/>
            <person name="Daniels S."/>
            <person name="Gietzen D."/>
            <person name="Schmidt J."/>
            <person name="Stevens K."/>
            <person name="Vitt U."/>
            <person name="Wingrove J."/>
            <person name="Camara F."/>
            <person name="Mar Alba M."/>
            <person name="Abril J.F."/>
            <person name="Guigo R."/>
            <person name="Smit A."/>
            <person name="Dubchak I."/>
            <person name="Rubin E.M."/>
            <person name="Couronne O."/>
            <person name="Poliakov A."/>
            <person name="Huebner N."/>
            <person name="Ganten D."/>
            <person name="Goesele C."/>
            <person name="Hummel O."/>
            <person name="Kreitler T."/>
            <person name="Lee Y.-A."/>
            <person name="Monti J."/>
            <person name="Schulz H."/>
            <person name="Zimdahl H."/>
            <person name="Himmelbauer H."/>
            <person name="Lehrach H."/>
            <person name="Jacob H.J."/>
            <person name="Bromberg S."/>
            <person name="Gullings-Handley J."/>
            <person name="Jensen-Seaman M.I."/>
            <person name="Kwitek A.E."/>
            <person name="Lazar J."/>
            <person name="Pasko D."/>
            <person name="Tonellato P.J."/>
            <person name="Twigger S."/>
            <person name="Ponting C.P."/>
            <person name="Duarte J.M."/>
            <person name="Rice S."/>
            <person name="Goodstadt L."/>
            <person name="Beatson S.A."/>
            <person name="Emes R.D."/>
            <person name="Winter E.E."/>
            <person name="Webber C."/>
            <person name="Brandt P."/>
            <person name="Nyakatura G."/>
            <person name="Adetobi M."/>
            <person name="Chiaromonte F."/>
            <person name="Elnitski L."/>
            <person name="Eswara P."/>
            <person name="Hardison R.C."/>
            <person name="Hou M."/>
            <person name="Kolbe D."/>
            <person name="Makova K."/>
            <person name="Miller W."/>
            <person name="Nekrutenko A."/>
            <person name="Riemer C."/>
            <person name="Schwartz S."/>
            <person name="Taylor J."/>
            <person name="Yang S."/>
            <person name="Zhang Y."/>
            <person name="Lindpaintner K."/>
            <person name="Andrews T.D."/>
            <person name="Caccamo M."/>
            <person name="Clamp M."/>
            <person name="Clarke L."/>
            <person name="Curwen V."/>
            <person name="Durbin R.M."/>
            <person name="Eyras E."/>
            <person name="Searle S.M."/>
            <person name="Cooper G.M."/>
            <person name="Batzoglou S."/>
            <person name="Brudno M."/>
            <person name="Sidow A."/>
            <person name="Stone E.A."/>
            <person name="Payseur B.A."/>
            <person name="Bourque G."/>
            <person name="Lopez-Otin C."/>
            <person name="Puente X.S."/>
            <person name="Chakrabarti K."/>
            <person name="Chatterji S."/>
            <person name="Dewey C."/>
            <person name="Pachter L."/>
            <person name="Bray N."/>
            <person name="Yap V.B."/>
            <person name="Caspi A."/>
            <person name="Tesler G."/>
            <person name="Pevzner P.A."/>
            <person name="Haussler D."/>
            <person name="Roskin K.M."/>
            <person name="Baertsch R."/>
            <person name="Clawson H."/>
            <person name="Furey T.S."/>
            <person name="Hinrichs A.S."/>
            <person name="Karolchik D."/>
            <person name="Kent W.J."/>
            <person name="Rosenbloom K.R."/>
            <person name="Trumbower H."/>
            <person name="Weirauch M."/>
            <person name="Cooper D.N."/>
            <person name="Stenson P.D."/>
            <person name="Ma B."/>
            <person name="Brent M."/>
            <person name="Arumugam M."/>
            <person name="Shteynberg D."/>
            <person name="Copley R.R."/>
            <person name="Taylor M.S."/>
            <person name="Riethman H."/>
            <person name="Mudunuri U."/>
            <person name="Peterson J."/>
            <person name="Guyer M."/>
            <person name="Felsenfeld A."/>
            <person name="Old S."/>
            <person name="Mockrin S."/>
            <person name="Collins F.S."/>
        </authorList>
    </citation>
    <scope>NUCLEOTIDE SEQUENCE [LARGE SCALE GENOMIC DNA]</scope>
    <source>
        <strain evidence="7">Brown Norway</strain>
    </source>
</reference>
<reference evidence="9 10" key="2">
    <citation type="journal article" date="2004" name="Genome Res.">
        <title>The status, quality, and expansion of the NIH full-length cDNA project: the Mammalian Gene Collection (MGC).</title>
        <authorList>
            <consortium name="The MGC Project Team"/>
        </authorList>
    </citation>
    <scope>NUCLEOTIDE SEQUENCE [LARGE SCALE MRNA] OF 1-213</scope>
    <source>
        <tissue evidence="10">Ovary</tissue>
    </source>
</reference>
<reference evidence="12" key="3">
    <citation type="submission" date="2003-10" db="EMBL/GenBank/DDBJ databases">
        <title>Rattus norvegicus K-CL cotransporter KCC4.</title>
        <authorList>
            <person name="Le Rouzic P."/>
            <person name="Stanley S.J."/>
            <person name="Luckman S.M."/>
        </authorList>
    </citation>
    <scope>NUCLEOTIDE SEQUENCE [MRNA] OF 26-159</scope>
    <source>
        <strain evidence="12">Sprague-Dawley</strain>
        <tissue evidence="12">Pancreas</tissue>
    </source>
</reference>
<reference evidence="12" key="4">
    <citation type="submission" date="2003-09" db="EMBL/GenBank/DDBJ databases">
        <title>Aldosterone up regulates K+-Cl- cotransporter expression and activity in arterial tissue.</title>
        <authorList>
            <person name="Lopez N.C."/>
            <person name="Michea L."/>
        </authorList>
    </citation>
    <scope>NUCLEOTIDE SEQUENCE [MRNA] OF 80-105 AND 113-129</scope>
    <source>
        <strain evidence="11">Sprague-Dawley</strain>
    </source>
</reference>
<reference evidence="9" key="5">
    <citation type="journal article" date="2006" name="Brain Res.">
        <title>KCC3 and KCC4 expression in rat adult forebrain.</title>
        <authorList>
            <person name="Le Rouzic P."/>
            <person name="Ivanov T.R."/>
            <person name="Stanley P.J."/>
            <person name="Baudoin F.M.-H."/>
            <person name="Chan F."/>
            <person name="Pinteaux E."/>
            <person name="Brown P.D."/>
            <person name="Luckman S.M."/>
        </authorList>
    </citation>
    <scope>TISSUE SPECIFICITY</scope>
</reference>
<accession>Q5RK27</accession>
<accession>Q6T7Y5</accession>
<accession>Q6TUA1</accession>
<accession>Q6TUA2</accession>
<proteinExistence type="evidence at transcript level"/>
<organism>
    <name type="scientific">Rattus norvegicus</name>
    <name type="common">Rat</name>
    <dbReference type="NCBI Taxonomy" id="10116"/>
    <lineage>
        <taxon>Eukaryota</taxon>
        <taxon>Metazoa</taxon>
        <taxon>Chordata</taxon>
        <taxon>Craniata</taxon>
        <taxon>Vertebrata</taxon>
        <taxon>Euteleostomi</taxon>
        <taxon>Mammalia</taxon>
        <taxon>Eutheria</taxon>
        <taxon>Euarchontoglires</taxon>
        <taxon>Glires</taxon>
        <taxon>Rodentia</taxon>
        <taxon>Myomorpha</taxon>
        <taxon>Muroidea</taxon>
        <taxon>Muridae</taxon>
        <taxon>Murinae</taxon>
        <taxon>Rattus</taxon>
    </lineage>
</organism>
<gene>
    <name evidence="10 13" type="primary">Slc12a7</name>
    <name evidence="11" type="synonym">Kcc4</name>
</gene>
<keyword id="KW-1003">Cell membrane</keyword>
<keyword id="KW-0868">Chloride</keyword>
<keyword id="KW-0325">Glycoprotein</keyword>
<keyword id="KW-0406">Ion transport</keyword>
<keyword id="KW-0472">Membrane</keyword>
<keyword id="KW-0479">Metal-binding</keyword>
<keyword id="KW-0597">Phosphoprotein</keyword>
<keyword id="KW-0630">Potassium</keyword>
<keyword id="KW-0633">Potassium transport</keyword>
<keyword id="KW-1185">Reference proteome</keyword>
<keyword id="KW-0769">Symport</keyword>
<keyword id="KW-0812">Transmembrane</keyword>
<keyword id="KW-1133">Transmembrane helix</keyword>
<keyword id="KW-0813">Transport</keyword>
<protein>
    <recommendedName>
        <fullName>Solute carrier family 12 member 7</fullName>
    </recommendedName>
    <alternativeName>
        <fullName>Electroneutral potassium-chloride cotransporter 4</fullName>
    </alternativeName>
    <alternativeName>
        <fullName>K-Cl cotransporter 4</fullName>
    </alternativeName>
</protein>
<feature type="chain" id="PRO_0000299076" description="Solute carrier family 12 member 7">
    <location>
        <begin position="1"/>
        <end position="1083"/>
    </location>
</feature>
<feature type="topological domain" description="Cytoplasmic" evidence="9">
    <location>
        <begin position="1"/>
        <end position="119"/>
    </location>
</feature>
<feature type="transmembrane region" description="Discontinuously helical; Name=1" evidence="4">
    <location>
        <begin position="120"/>
        <end position="142"/>
    </location>
</feature>
<feature type="topological domain" description="Extracellular" evidence="9">
    <location>
        <begin position="143"/>
        <end position="149"/>
    </location>
</feature>
<feature type="transmembrane region" description="Helical; Name=2" evidence="4">
    <location>
        <begin position="150"/>
        <end position="172"/>
    </location>
</feature>
<feature type="topological domain" description="Cytoplasmic" evidence="9">
    <location>
        <begin position="173"/>
        <end position="196"/>
    </location>
</feature>
<feature type="transmembrane region" description="Helical; Name=3" evidence="4">
    <location>
        <begin position="197"/>
        <end position="225"/>
    </location>
</feature>
<feature type="topological domain" description="Extracellular" evidence="9">
    <location>
        <begin position="226"/>
        <end position="249"/>
    </location>
</feature>
<feature type="transmembrane region" description="Helical; Name=4" evidence="4">
    <location>
        <begin position="250"/>
        <end position="271"/>
    </location>
</feature>
<feature type="transmembrane region" description="Helical; Name=5" evidence="4">
    <location>
        <begin position="272"/>
        <end position="300"/>
    </location>
</feature>
<feature type="topological domain" description="Extracellular" evidence="9">
    <location>
        <begin position="301"/>
        <end position="419"/>
    </location>
</feature>
<feature type="transmembrane region" description="Helical; Name=6" evidence="4">
    <location>
        <begin position="420"/>
        <end position="440"/>
    </location>
</feature>
<feature type="topological domain" description="Cytoplasmic" evidence="9">
    <location>
        <begin position="441"/>
        <end position="450"/>
    </location>
</feature>
<feature type="transmembrane region" description="Helical; Name=7" evidence="4">
    <location>
        <begin position="451"/>
        <end position="473"/>
    </location>
</feature>
<feature type="topological domain" description="Extracellular" evidence="9">
    <location>
        <begin position="474"/>
        <end position="504"/>
    </location>
</feature>
<feature type="transmembrane region" description="Helical; Name=8" evidence="4">
    <location>
        <begin position="505"/>
        <end position="531"/>
    </location>
</feature>
<feature type="topological domain" description="Cytoplasmic" evidence="9">
    <location>
        <begin position="532"/>
        <end position="554"/>
    </location>
</feature>
<feature type="transmembrane region" description="Helical; Name=9" evidence="4">
    <location>
        <begin position="555"/>
        <end position="573"/>
    </location>
</feature>
<feature type="transmembrane region" description="Helical; Name=10" evidence="4">
    <location>
        <begin position="574"/>
        <end position="598"/>
    </location>
</feature>
<feature type="topological domain" description="Cytoplasmic" evidence="9">
    <location>
        <begin position="599"/>
        <end position="612"/>
    </location>
</feature>
<feature type="transmembrane region" description="Helical; Name=11" evidence="4">
    <location>
        <begin position="613"/>
        <end position="635"/>
    </location>
</feature>
<feature type="transmembrane region" description="Helical; Name=12" evidence="4">
    <location>
        <begin position="636"/>
        <end position="651"/>
    </location>
</feature>
<feature type="topological domain" description="Cytoplasmic" evidence="9">
    <location>
        <begin position="652"/>
        <end position="1083"/>
    </location>
</feature>
<feature type="region of interest" description="Disordered" evidence="6">
    <location>
        <begin position="1"/>
        <end position="51"/>
    </location>
</feature>
<feature type="region of interest" description="Scissor helix" evidence="4">
    <location>
        <begin position="664"/>
        <end position="680"/>
    </location>
</feature>
<feature type="compositionally biased region" description="Basic and acidic residues" evidence="6">
    <location>
        <begin position="12"/>
        <end position="27"/>
    </location>
</feature>
<feature type="binding site" evidence="4">
    <location>
        <position position="131"/>
    </location>
    <ligand>
        <name>K(+)</name>
        <dbReference type="ChEBI" id="CHEBI:29103"/>
    </ligand>
</feature>
<feature type="binding site" evidence="4">
    <location>
        <position position="132"/>
    </location>
    <ligand>
        <name>K(+)</name>
        <dbReference type="ChEBI" id="CHEBI:29103"/>
    </ligand>
</feature>
<feature type="binding site" evidence="4">
    <location>
        <position position="135"/>
    </location>
    <ligand>
        <name>chloride</name>
        <dbReference type="ChEBI" id="CHEBI:17996"/>
        <label>2</label>
    </ligand>
</feature>
<feature type="binding site" evidence="4">
    <location>
        <position position="429"/>
    </location>
    <ligand>
        <name>chloride</name>
        <dbReference type="ChEBI" id="CHEBI:17996"/>
        <label>2</label>
    </ligand>
</feature>
<feature type="binding site" evidence="4">
    <location>
        <position position="429"/>
    </location>
    <ligand>
        <name>K(+)</name>
        <dbReference type="ChEBI" id="CHEBI:29103"/>
    </ligand>
</feature>
<feature type="binding site" evidence="4">
    <location>
        <position position="432"/>
    </location>
    <ligand>
        <name>K(+)</name>
        <dbReference type="ChEBI" id="CHEBI:29103"/>
    </ligand>
</feature>
<feature type="binding site" evidence="4">
    <location>
        <position position="433"/>
    </location>
    <ligand>
        <name>chloride</name>
        <dbReference type="ChEBI" id="CHEBI:17996"/>
        <label>1</label>
    </ligand>
</feature>
<feature type="binding site" evidence="4">
    <location>
        <position position="434"/>
    </location>
    <ligand>
        <name>chloride</name>
        <dbReference type="ChEBI" id="CHEBI:17996"/>
        <label>1</label>
    </ligand>
</feature>
<feature type="binding site" evidence="4">
    <location>
        <position position="589"/>
    </location>
    <ligand>
        <name>chloride</name>
        <dbReference type="ChEBI" id="CHEBI:17996"/>
        <label>1</label>
    </ligand>
</feature>
<feature type="modified residue" description="Phosphoserine" evidence="3">
    <location>
        <position position="30"/>
    </location>
</feature>
<feature type="modified residue" description="Phosphoserine" evidence="3">
    <location>
        <position position="33"/>
    </location>
</feature>
<feature type="modified residue" description="Phosphoserine" evidence="4">
    <location>
        <position position="50"/>
    </location>
</feature>
<feature type="modified residue" description="Phosphoserine" evidence="4">
    <location>
        <position position="62"/>
    </location>
</feature>
<feature type="modified residue" description="Phosphothreonine" evidence="3">
    <location>
        <position position="973"/>
    </location>
</feature>
<feature type="modified residue" description="Phosphothreonine" evidence="3">
    <location>
        <position position="980"/>
    </location>
</feature>
<feature type="glycosylation site" description="N-linked (GlcNAc...) asparagine" evidence="5">
    <location>
        <position position="312"/>
    </location>
</feature>
<feature type="glycosylation site" description="N-linked (GlcNAc...) asparagine" evidence="5">
    <location>
        <position position="331"/>
    </location>
</feature>
<feature type="glycosylation site" description="N-linked (GlcNAc...) asparagine" evidence="5">
    <location>
        <position position="360"/>
    </location>
</feature>
<feature type="sequence conflict" description="In Ref. 4; AAQ93481." evidence="9" ref="4">
    <original>Y</original>
    <variation>F</variation>
    <location>
        <position position="125"/>
    </location>
</feature>
<name>S12A7_RAT</name>
<evidence type="ECO:0000250" key="1"/>
<evidence type="ECO:0000250" key="2">
    <source>
        <dbReference type="UniProtKB" id="Q7YRU6"/>
    </source>
</evidence>
<evidence type="ECO:0000250" key="3">
    <source>
        <dbReference type="UniProtKB" id="Q9WVL3"/>
    </source>
</evidence>
<evidence type="ECO:0000250" key="4">
    <source>
        <dbReference type="UniProtKB" id="Q9Y666"/>
    </source>
</evidence>
<evidence type="ECO:0000255" key="5"/>
<evidence type="ECO:0000256" key="6">
    <source>
        <dbReference type="SAM" id="MobiDB-lite"/>
    </source>
</evidence>
<evidence type="ECO:0000269" key="7">
    <source>
    </source>
</evidence>
<evidence type="ECO:0000269" key="8">
    <source>
    </source>
</evidence>
<evidence type="ECO:0000305" key="9"/>
<evidence type="ECO:0000312" key="10">
    <source>
        <dbReference type="EMBL" id="AAH86339.1"/>
    </source>
</evidence>
<evidence type="ECO:0000312" key="11">
    <source>
        <dbReference type="EMBL" id="AAQ93481.1"/>
    </source>
</evidence>
<evidence type="ECO:0000312" key="12">
    <source>
        <dbReference type="EMBL" id="AAR10805.1"/>
    </source>
</evidence>
<evidence type="ECO:0000312" key="13">
    <source>
        <dbReference type="RGD" id="1359672"/>
    </source>
</evidence>
<sequence>MPTNFTVVPVEARADGAGDEAAERTEEPGSPESADPACPTPGDGNPRENSPFINNVEVERESYFEGKNMALFEEEMDSNPMVSSLLNKLANYTNLSQGVVEHEEDEDSRRREIKAPRMGTFIGVYLPCLQNILGVILFLRLTWIVGAAGVLESFLIVAMCCTCTMLTAISMSAIATNGVVPAGGSYYMISRSLGPEFGGAVGLCFYLGTTFAGAMYILGTIEIFLTYISPSAAIFQAETADGEAAALLNNMRVYGSCALALMAVVVFVGVKYVNKLALVFLACVVLSILAIYAGVIKTAFAPPDIPVCLLGNRTLANRNFDTCAKMQVVSNGTVTTALWRLFCNGSSLGASCDEYFVQNNVTEIQGIPGVASGVFLDNLWSTYSDKGAFVEKKGVSSVPVSEESRPGGLPYVLTDIMTYFTMLVGIYFPSVTGIMAGSNRSGDLKDAQKSIPTGTILAIVTTSFIYLSCIVLFGACIEGVVLRDKFGEALQGNLVIGMLAWPSPWVIVIGSFFSTCGAGLQSLTGAPRLLQAIARDGIIPFLQVFGHGKANGEPTWALLLTALICETGILIASLDSVAPILSMFFLMCYMFVNLACAVQTLLRTPNWRPRFKFYHWTLSFLGMSLCLALMFICSWYYALFAMLIAGCIYKYIEYRGAEKEWGDGIRGLSLNAARYALLRVEHGPPHTKNWRPQVLVMLNLDSEQCVKHPRLLSFTSQLKAGKGLTIVGSVLEGTYLDKHVEAQRAEENIRSLMSAEKMKGFCQLVVSSNLRDGASHLIQSAGLGGMKHNTVLMAWPEAWKQADNPFSWKNFVDTVRDTTAAHQALLVAKNIDLFPQNQERFSDGNIDVWWIVHDGGMLMLLPFLLRQHKVWRKCRMRIFTVAQVDDNSIQMKKDLQMFLYHLRISAEVEVVEMVENDISAFTYEKTLMMEQRSQMLKQMQLSKNEREREAQLIHDRNTASHTVATARTEAPPTPDKVQMTWTKEKLIAEKHRNKDTGTSGFKDLFSLKPDQSNVRRMHTAVKLNGVVLNKSQDAQLVLLNMPGPPKSRQGDENYMEFLEVLTEGLNRVLLVRGGGREVITIYS</sequence>
<dbReference type="EMBL" id="AABR03000133">
    <property type="status" value="NOT_ANNOTATED_CDS"/>
    <property type="molecule type" value="mRNA"/>
</dbReference>
<dbReference type="EMBL" id="BC086339">
    <property type="protein sequence ID" value="AAH86339.1"/>
    <property type="status" value="ALT_SEQ"/>
    <property type="molecule type" value="mRNA"/>
</dbReference>
<dbReference type="EMBL" id="AY429042">
    <property type="protein sequence ID" value="AAR10805.1"/>
    <property type="molecule type" value="mRNA"/>
</dbReference>
<dbReference type="EMBL" id="AY387486">
    <property type="protein sequence ID" value="AAQ93480.1"/>
    <property type="molecule type" value="mRNA"/>
</dbReference>
<dbReference type="EMBL" id="AY387487">
    <property type="protein sequence ID" value="AAQ93481.1"/>
    <property type="molecule type" value="mRNA"/>
</dbReference>
<dbReference type="RefSeq" id="NP_001013162.2">
    <property type="nucleotide sequence ID" value="NM_001013144.2"/>
</dbReference>
<dbReference type="SMR" id="Q5RK27"/>
<dbReference type="FunCoup" id="Q5RK27">
    <property type="interactions" value="741"/>
</dbReference>
<dbReference type="IntAct" id="Q5RK27">
    <property type="interactions" value="1"/>
</dbReference>
<dbReference type="STRING" id="10116.ENSRNOP00000074714"/>
<dbReference type="GlyCosmos" id="Q5RK27">
    <property type="glycosylation" value="3 sites, No reported glycans"/>
</dbReference>
<dbReference type="GlyGen" id="Q5RK27">
    <property type="glycosylation" value="5 sites"/>
</dbReference>
<dbReference type="iPTMnet" id="Q5RK27"/>
<dbReference type="PhosphoSitePlus" id="Q5RK27"/>
<dbReference type="SwissPalm" id="Q5RK27"/>
<dbReference type="PaxDb" id="10116-ENSRNOP00000022635"/>
<dbReference type="GeneID" id="308069"/>
<dbReference type="KEGG" id="rno:308069"/>
<dbReference type="UCSC" id="RGD:1359672">
    <property type="organism name" value="rat"/>
</dbReference>
<dbReference type="AGR" id="RGD:1359672"/>
<dbReference type="CTD" id="10723"/>
<dbReference type="RGD" id="1359672">
    <property type="gene designation" value="Slc12a7"/>
</dbReference>
<dbReference type="VEuPathDB" id="HostDB:ENSRNOG00000016372"/>
<dbReference type="eggNOG" id="KOG2082">
    <property type="taxonomic scope" value="Eukaryota"/>
</dbReference>
<dbReference type="HOGENOM" id="CLU_001883_1_2_1"/>
<dbReference type="InParanoid" id="Q5RK27"/>
<dbReference type="OrthoDB" id="2020542at2759"/>
<dbReference type="PhylomeDB" id="Q5RK27"/>
<dbReference type="TreeFam" id="TF313657"/>
<dbReference type="Reactome" id="R-RNO-426117">
    <property type="pathway name" value="Cation-coupled Chloride cotransporters"/>
</dbReference>
<dbReference type="PRO" id="PR:Q5RK27"/>
<dbReference type="Proteomes" id="UP000002494">
    <property type="component" value="Chromosome 1"/>
</dbReference>
<dbReference type="Bgee" id="ENSRNOG00000016372">
    <property type="expression patterns" value="Expressed in heart and 18 other cell types or tissues"/>
</dbReference>
<dbReference type="ExpressionAtlas" id="Q5RK27">
    <property type="expression patterns" value="baseline and differential"/>
</dbReference>
<dbReference type="GO" id="GO:0005886">
    <property type="term" value="C:plasma membrane"/>
    <property type="evidence" value="ECO:0000318"/>
    <property type="project" value="GO_Central"/>
</dbReference>
<dbReference type="GO" id="GO:0032991">
    <property type="term" value="C:protein-containing complex"/>
    <property type="evidence" value="ECO:0000266"/>
    <property type="project" value="RGD"/>
</dbReference>
<dbReference type="GO" id="GO:0045202">
    <property type="term" value="C:synapse"/>
    <property type="evidence" value="ECO:0007669"/>
    <property type="project" value="GOC"/>
</dbReference>
<dbReference type="GO" id="GO:0046872">
    <property type="term" value="F:metal ion binding"/>
    <property type="evidence" value="ECO:0007669"/>
    <property type="project" value="UniProtKB-KW"/>
</dbReference>
<dbReference type="GO" id="GO:0015379">
    <property type="term" value="F:potassium:chloride symporter activity"/>
    <property type="evidence" value="ECO:0000250"/>
    <property type="project" value="UniProtKB"/>
</dbReference>
<dbReference type="GO" id="GO:0019901">
    <property type="term" value="F:protein kinase binding"/>
    <property type="evidence" value="ECO:0000266"/>
    <property type="project" value="RGD"/>
</dbReference>
<dbReference type="GO" id="GO:0006884">
    <property type="term" value="P:cell volume homeostasis"/>
    <property type="evidence" value="ECO:0000315"/>
    <property type="project" value="RGD"/>
</dbReference>
<dbReference type="GO" id="GO:0071333">
    <property type="term" value="P:cellular response to glucose stimulus"/>
    <property type="evidence" value="ECO:0000266"/>
    <property type="project" value="RGD"/>
</dbReference>
<dbReference type="GO" id="GO:0007268">
    <property type="term" value="P:chemical synaptic transmission"/>
    <property type="evidence" value="ECO:0000318"/>
    <property type="project" value="GO_Central"/>
</dbReference>
<dbReference type="GO" id="GO:0055064">
    <property type="term" value="P:chloride ion homeostasis"/>
    <property type="evidence" value="ECO:0000318"/>
    <property type="project" value="GO_Central"/>
</dbReference>
<dbReference type="GO" id="GO:1902476">
    <property type="term" value="P:chloride transmembrane transport"/>
    <property type="evidence" value="ECO:0000318"/>
    <property type="project" value="GO_Central"/>
</dbReference>
<dbReference type="GO" id="GO:0055075">
    <property type="term" value="P:potassium ion homeostasis"/>
    <property type="evidence" value="ECO:0000318"/>
    <property type="project" value="GO_Central"/>
</dbReference>
<dbReference type="GO" id="GO:1990573">
    <property type="term" value="P:potassium ion import across plasma membrane"/>
    <property type="evidence" value="ECO:0000266"/>
    <property type="project" value="RGD"/>
</dbReference>
<dbReference type="GO" id="GO:0071805">
    <property type="term" value="P:potassium ion transmembrane transport"/>
    <property type="evidence" value="ECO:0000250"/>
    <property type="project" value="UniProtKB"/>
</dbReference>
<dbReference type="FunFam" id="1.20.1740.10:FF:000049">
    <property type="entry name" value="Solute carrier family 12 (potassium/chloride transporter), member 4"/>
    <property type="match status" value="1"/>
</dbReference>
<dbReference type="FunFam" id="1.20.1740.10:FF:000040">
    <property type="entry name" value="Solute carrier family 12 member 6"/>
    <property type="match status" value="1"/>
</dbReference>
<dbReference type="Gene3D" id="1.20.1740.10">
    <property type="entry name" value="Amino acid/polyamine transporter I"/>
    <property type="match status" value="1"/>
</dbReference>
<dbReference type="InterPro" id="IPR004841">
    <property type="entry name" value="AA-permease/SLC12A_dom"/>
</dbReference>
<dbReference type="InterPro" id="IPR000076">
    <property type="entry name" value="KCL_cotranspt"/>
</dbReference>
<dbReference type="InterPro" id="IPR018491">
    <property type="entry name" value="SLC12_C"/>
</dbReference>
<dbReference type="InterPro" id="IPR004842">
    <property type="entry name" value="SLC12A_fam"/>
</dbReference>
<dbReference type="NCBIfam" id="TIGR00930">
    <property type="entry name" value="2a30"/>
    <property type="match status" value="1"/>
</dbReference>
<dbReference type="PANTHER" id="PTHR11827:SF47">
    <property type="entry name" value="SOLUTE CARRIER FAMILY 12 MEMBER 7"/>
    <property type="match status" value="1"/>
</dbReference>
<dbReference type="PANTHER" id="PTHR11827">
    <property type="entry name" value="SOLUTE CARRIER FAMILY 12, CATION COTRANSPORTERS"/>
    <property type="match status" value="1"/>
</dbReference>
<dbReference type="Pfam" id="PF00324">
    <property type="entry name" value="AA_permease"/>
    <property type="match status" value="2"/>
</dbReference>
<dbReference type="Pfam" id="PF03522">
    <property type="entry name" value="SLC12"/>
    <property type="match status" value="2"/>
</dbReference>
<dbReference type="PRINTS" id="PR01081">
    <property type="entry name" value="KCLTRNSPORT"/>
</dbReference>